<organism>
    <name type="scientific">Neosartorya fischeri (strain ATCC 1020 / DSM 3700 / CBS 544.65 / FGSC A1164 / JCM 1740 / NRRL 181 / WB 181)</name>
    <name type="common">Aspergillus fischerianus</name>
    <dbReference type="NCBI Taxonomy" id="331117"/>
    <lineage>
        <taxon>Eukaryota</taxon>
        <taxon>Fungi</taxon>
        <taxon>Dikarya</taxon>
        <taxon>Ascomycota</taxon>
        <taxon>Pezizomycotina</taxon>
        <taxon>Eurotiomycetes</taxon>
        <taxon>Eurotiomycetidae</taxon>
        <taxon>Eurotiales</taxon>
        <taxon>Aspergillaceae</taxon>
        <taxon>Aspergillus</taxon>
        <taxon>Aspergillus subgen. Fumigati</taxon>
    </lineage>
</organism>
<keyword id="KW-0031">Aminopeptidase</keyword>
<keyword id="KW-0378">Hydrolase</keyword>
<keyword id="KW-0464">Manganese</keyword>
<keyword id="KW-0479">Metal-binding</keyword>
<keyword id="KW-0482">Metalloprotease</keyword>
<keyword id="KW-0645">Protease</keyword>
<keyword id="KW-1185">Reference proteome</keyword>
<proteinExistence type="inferred from homology"/>
<dbReference type="EC" id="3.4.11.9"/>
<dbReference type="EMBL" id="DS027696">
    <property type="protein sequence ID" value="EAW18373.1"/>
    <property type="molecule type" value="Genomic_DNA"/>
</dbReference>
<dbReference type="RefSeq" id="XP_001260270.1">
    <property type="nucleotide sequence ID" value="XM_001260269.1"/>
</dbReference>
<dbReference type="SMR" id="A1DG66"/>
<dbReference type="STRING" id="331117.A1DG66"/>
<dbReference type="EnsemblFungi" id="EAW18373">
    <property type="protein sequence ID" value="EAW18373"/>
    <property type="gene ID" value="NFIA_083240"/>
</dbReference>
<dbReference type="GeneID" id="4586827"/>
<dbReference type="KEGG" id="nfi:NFIA_083240"/>
<dbReference type="VEuPathDB" id="FungiDB:NFIA_083240"/>
<dbReference type="eggNOG" id="KOG2737">
    <property type="taxonomic scope" value="Eukaryota"/>
</dbReference>
<dbReference type="HOGENOM" id="CLU_017266_1_2_1"/>
<dbReference type="OMA" id="DAHALFF"/>
<dbReference type="OrthoDB" id="10261878at2759"/>
<dbReference type="Proteomes" id="UP000006702">
    <property type="component" value="Unassembled WGS sequence"/>
</dbReference>
<dbReference type="GO" id="GO:0030145">
    <property type="term" value="F:manganese ion binding"/>
    <property type="evidence" value="ECO:0007669"/>
    <property type="project" value="InterPro"/>
</dbReference>
<dbReference type="GO" id="GO:0070006">
    <property type="term" value="F:metalloaminopeptidase activity"/>
    <property type="evidence" value="ECO:0007669"/>
    <property type="project" value="InterPro"/>
</dbReference>
<dbReference type="GO" id="GO:0006508">
    <property type="term" value="P:proteolysis"/>
    <property type="evidence" value="ECO:0007669"/>
    <property type="project" value="UniProtKB-KW"/>
</dbReference>
<dbReference type="CDD" id="cd01087">
    <property type="entry name" value="Prolidase"/>
    <property type="match status" value="1"/>
</dbReference>
<dbReference type="FunFam" id="3.90.230.10:FF:000002">
    <property type="entry name" value="Xaa-Pro aminopeptidase 3"/>
    <property type="match status" value="1"/>
</dbReference>
<dbReference type="Gene3D" id="3.90.230.10">
    <property type="entry name" value="Creatinase/methionine aminopeptidase superfamily"/>
    <property type="match status" value="1"/>
</dbReference>
<dbReference type="Gene3D" id="3.40.350.10">
    <property type="entry name" value="Creatinase/prolidase N-terminal domain"/>
    <property type="match status" value="1"/>
</dbReference>
<dbReference type="InterPro" id="IPR007865">
    <property type="entry name" value="Aminopep_P_N"/>
</dbReference>
<dbReference type="InterPro" id="IPR029149">
    <property type="entry name" value="Creatin/AminoP/Spt16_N"/>
</dbReference>
<dbReference type="InterPro" id="IPR036005">
    <property type="entry name" value="Creatinase/aminopeptidase-like"/>
</dbReference>
<dbReference type="InterPro" id="IPR000994">
    <property type="entry name" value="Pept_M24"/>
</dbReference>
<dbReference type="InterPro" id="IPR052433">
    <property type="entry name" value="X-Pro_dipept-like"/>
</dbReference>
<dbReference type="PANTHER" id="PTHR43226">
    <property type="entry name" value="XAA-PRO AMINOPEPTIDASE 3"/>
    <property type="match status" value="1"/>
</dbReference>
<dbReference type="PANTHER" id="PTHR43226:SF1">
    <property type="entry name" value="XAA-PRO DIPEPTIDASE"/>
    <property type="match status" value="1"/>
</dbReference>
<dbReference type="Pfam" id="PF05195">
    <property type="entry name" value="AMP_N"/>
    <property type="match status" value="1"/>
</dbReference>
<dbReference type="Pfam" id="PF00557">
    <property type="entry name" value="Peptidase_M24"/>
    <property type="match status" value="1"/>
</dbReference>
<dbReference type="SMART" id="SM01011">
    <property type="entry name" value="AMP_N"/>
    <property type="match status" value="1"/>
</dbReference>
<dbReference type="SUPFAM" id="SSF55920">
    <property type="entry name" value="Creatinase/aminopeptidase"/>
    <property type="match status" value="1"/>
</dbReference>
<dbReference type="SUPFAM" id="SSF53092">
    <property type="entry name" value="Creatinase/prolidase N-terminal domain"/>
    <property type="match status" value="1"/>
</dbReference>
<comment type="function">
    <text evidence="1">Catalyzes the removal of a penultimate prolyl residue from the N-termini of peptides.</text>
</comment>
<comment type="catalytic activity">
    <reaction>
        <text>Release of any N-terminal amino acid, including proline, that is linked to proline, even from a dipeptide or tripeptide.</text>
        <dbReference type="EC" id="3.4.11.9"/>
    </reaction>
</comment>
<comment type="cofactor">
    <cofactor evidence="1">
        <name>Mn(2+)</name>
        <dbReference type="ChEBI" id="CHEBI:29035"/>
    </cofactor>
    <text evidence="1">Binds 2 manganese ions per subunit.</text>
</comment>
<comment type="similarity">
    <text evidence="2">Belongs to the peptidase M24B family.</text>
</comment>
<protein>
    <recommendedName>
        <fullName>Probable Xaa-Pro aminopeptidase pepP</fullName>
        <ecNumber>3.4.11.9</ecNumber>
    </recommendedName>
    <alternativeName>
        <fullName>Aminoacylproline aminopeptidase</fullName>
    </alternativeName>
    <alternativeName>
        <fullName>Prolidase</fullName>
    </alternativeName>
</protein>
<accession>A1DG66</accession>
<sequence>MAAVDAILAGKYPAKAHARRVAESLQSHRNGCPGIVYLEAQKTRLIEDNDEPVPFRQRRPFFYLSGCPLSDSCLVYDLSEDQLTLFIPPVDPEDVIWSGLPMSTEQAQNQYDVDRVLVTTELNSTLASIASSHGGKAIAFTIADQVSESTQFHGFSEVNQSVLKGVIEQSRVVKDEYEVALLRKANDISAKAHIAAIKASQTAVNEREIEGAFIATCIANGAREQSYHPIVACGENGAILHYGKNDDTLIDPVTNQKKRNVLIDAGGEYRTYCADITRVIPVGGKFTAETRQIYDIVLQMQTECIAMLKEGVQWEDVHAHAHRVAIRGLLRLGILRGAEDEIFEKRVSVAFFPHGLGHYLGMDTHDTGGNPNYTDKDTMFRYLRVRGRLPAGSVITVEPGVYFCRFIIEPYIKSPESNKYIDTNVLDRYWRVGGVRIEDNVVVTKNGYDNLTTAPKAVDEIERLAVS</sequence>
<evidence type="ECO:0000250" key="1"/>
<evidence type="ECO:0000305" key="2"/>
<reference key="1">
    <citation type="journal article" date="2008" name="PLoS Genet.">
        <title>Genomic islands in the pathogenic filamentous fungus Aspergillus fumigatus.</title>
        <authorList>
            <person name="Fedorova N.D."/>
            <person name="Khaldi N."/>
            <person name="Joardar V.S."/>
            <person name="Maiti R."/>
            <person name="Amedeo P."/>
            <person name="Anderson M.J."/>
            <person name="Crabtree J."/>
            <person name="Silva J.C."/>
            <person name="Badger J.H."/>
            <person name="Albarraq A."/>
            <person name="Angiuoli S."/>
            <person name="Bussey H."/>
            <person name="Bowyer P."/>
            <person name="Cotty P.J."/>
            <person name="Dyer P.S."/>
            <person name="Egan A."/>
            <person name="Galens K."/>
            <person name="Fraser-Liggett C.M."/>
            <person name="Haas B.J."/>
            <person name="Inman J.M."/>
            <person name="Kent R."/>
            <person name="Lemieux S."/>
            <person name="Malavazi I."/>
            <person name="Orvis J."/>
            <person name="Roemer T."/>
            <person name="Ronning C.M."/>
            <person name="Sundaram J.P."/>
            <person name="Sutton G."/>
            <person name="Turner G."/>
            <person name="Venter J.C."/>
            <person name="White O.R."/>
            <person name="Whitty B.R."/>
            <person name="Youngman P."/>
            <person name="Wolfe K.H."/>
            <person name="Goldman G.H."/>
            <person name="Wortman J.R."/>
            <person name="Jiang B."/>
            <person name="Denning D.W."/>
            <person name="Nierman W.C."/>
        </authorList>
    </citation>
    <scope>NUCLEOTIDE SEQUENCE [LARGE SCALE GENOMIC DNA]</scope>
    <source>
        <strain>ATCC 1020 / DSM 3700 / CBS 544.65 / FGSC A1164 / JCM 1740 / NRRL 181 / WB 181</strain>
    </source>
</reference>
<gene>
    <name type="primary">pepP</name>
    <name type="ORF">NFIA_083240</name>
</gene>
<feature type="chain" id="PRO_0000411878" description="Probable Xaa-Pro aminopeptidase pepP">
    <location>
        <begin position="1"/>
        <end position="467"/>
    </location>
</feature>
<feature type="binding site" evidence="1">
    <location>
        <position position="264"/>
    </location>
    <ligand>
        <name>Mn(2+)</name>
        <dbReference type="ChEBI" id="CHEBI:29035"/>
        <label>2</label>
    </ligand>
</feature>
<feature type="binding site" evidence="1">
    <location>
        <position position="275"/>
    </location>
    <ligand>
        <name>Mn(2+)</name>
        <dbReference type="ChEBI" id="CHEBI:29035"/>
        <label>1</label>
    </ligand>
</feature>
<feature type="binding site" evidence="1">
    <location>
        <position position="275"/>
    </location>
    <ligand>
        <name>Mn(2+)</name>
        <dbReference type="ChEBI" id="CHEBI:29035"/>
        <label>2</label>
    </ligand>
</feature>
<feature type="binding site" evidence="1">
    <location>
        <position position="398"/>
    </location>
    <ligand>
        <name>Mn(2+)</name>
        <dbReference type="ChEBI" id="CHEBI:29035"/>
        <label>1</label>
    </ligand>
</feature>
<feature type="binding site" evidence="1">
    <location>
        <position position="438"/>
    </location>
    <ligand>
        <name>Mn(2+)</name>
        <dbReference type="ChEBI" id="CHEBI:29035"/>
        <label>1</label>
    </ligand>
</feature>
<feature type="binding site" evidence="1">
    <location>
        <position position="438"/>
    </location>
    <ligand>
        <name>Mn(2+)</name>
        <dbReference type="ChEBI" id="CHEBI:29035"/>
        <label>2</label>
    </ligand>
</feature>
<name>AMPP3_NEOFI</name>